<proteinExistence type="inferred from homology"/>
<reference key="1">
    <citation type="journal article" date="2006" name="Mol. Microbiol.">
        <title>Role of pathogenicity island-associated integrases in the genome plasticity of uropathogenic Escherichia coli strain 536.</title>
        <authorList>
            <person name="Hochhut B."/>
            <person name="Wilde C."/>
            <person name="Balling G."/>
            <person name="Middendorf B."/>
            <person name="Dobrindt U."/>
            <person name="Brzuszkiewicz E."/>
            <person name="Gottschalk G."/>
            <person name="Carniel E."/>
            <person name="Hacker J."/>
        </authorList>
    </citation>
    <scope>NUCLEOTIDE SEQUENCE [LARGE SCALE GENOMIC DNA]</scope>
    <source>
        <strain>536 / UPEC</strain>
    </source>
</reference>
<comment type="function">
    <text evidence="1">Carrier of the growing fatty acid chain in fatty acid biosynthesis.</text>
</comment>
<comment type="pathway">
    <text evidence="1">Lipid metabolism; fatty acid biosynthesis.</text>
</comment>
<comment type="subcellular location">
    <subcellularLocation>
        <location evidence="1">Cytoplasm</location>
    </subcellularLocation>
</comment>
<comment type="PTM">
    <text evidence="1">4'-phosphopantetheine is transferred from CoA to a specific serine of apo-ACP by AcpS. This modification is essential for activity because fatty acids are bound in thioester linkage to the sulfhydryl of the prosthetic group.</text>
</comment>
<comment type="similarity">
    <text evidence="1">Belongs to the acyl carrier protein (ACP) family.</text>
</comment>
<feature type="chain" id="PRO_1000066607" description="Acyl carrier protein">
    <location>
        <begin position="1"/>
        <end position="78"/>
    </location>
</feature>
<feature type="domain" description="Carrier" evidence="2">
    <location>
        <begin position="2"/>
        <end position="77"/>
    </location>
</feature>
<feature type="modified residue" description="O-(pantetheine 4'-phosphoryl)serine" evidence="2">
    <location>
        <position position="37"/>
    </location>
</feature>
<sequence>MSTIEERVKKIIGEQLGVKQEEVTNNASFVEDLGADSLDTVELVMALEEEFDTEIPDEEAEKITTVQAAIDYINGHQA</sequence>
<keyword id="KW-0963">Cytoplasm</keyword>
<keyword id="KW-0275">Fatty acid biosynthesis</keyword>
<keyword id="KW-0276">Fatty acid metabolism</keyword>
<keyword id="KW-0444">Lipid biosynthesis</keyword>
<keyword id="KW-0443">Lipid metabolism</keyword>
<keyword id="KW-0596">Phosphopantetheine</keyword>
<keyword id="KW-0597">Phosphoprotein</keyword>
<organism>
    <name type="scientific">Escherichia coli O6:K15:H31 (strain 536 / UPEC)</name>
    <dbReference type="NCBI Taxonomy" id="362663"/>
    <lineage>
        <taxon>Bacteria</taxon>
        <taxon>Pseudomonadati</taxon>
        <taxon>Pseudomonadota</taxon>
        <taxon>Gammaproteobacteria</taxon>
        <taxon>Enterobacterales</taxon>
        <taxon>Enterobacteriaceae</taxon>
        <taxon>Escherichia</taxon>
    </lineage>
</organism>
<evidence type="ECO:0000255" key="1">
    <source>
        <dbReference type="HAMAP-Rule" id="MF_01217"/>
    </source>
</evidence>
<evidence type="ECO:0000255" key="2">
    <source>
        <dbReference type="PROSITE-ProRule" id="PRU00258"/>
    </source>
</evidence>
<gene>
    <name evidence="1" type="primary">acpP</name>
    <name type="ordered locus">ECP_1086</name>
</gene>
<name>ACP_ECOL5</name>
<protein>
    <recommendedName>
        <fullName evidence="1">Acyl carrier protein</fullName>
        <shortName evidence="1">ACP</shortName>
    </recommendedName>
</protein>
<accession>Q0TIY0</accession>
<dbReference type="EMBL" id="CP000247">
    <property type="protein sequence ID" value="ABG69099.1"/>
    <property type="molecule type" value="Genomic_DNA"/>
</dbReference>
<dbReference type="RefSeq" id="WP_000103754.1">
    <property type="nucleotide sequence ID" value="NC_008253.1"/>
</dbReference>
<dbReference type="SMR" id="Q0TIY0"/>
<dbReference type="GeneID" id="98387866"/>
<dbReference type="KEGG" id="ecp:ECP_1086"/>
<dbReference type="HOGENOM" id="CLU_108696_5_1_6"/>
<dbReference type="UniPathway" id="UPA00094"/>
<dbReference type="Proteomes" id="UP000009182">
    <property type="component" value="Chromosome"/>
</dbReference>
<dbReference type="GO" id="GO:0005829">
    <property type="term" value="C:cytosol"/>
    <property type="evidence" value="ECO:0007669"/>
    <property type="project" value="TreeGrafter"/>
</dbReference>
<dbReference type="GO" id="GO:0016020">
    <property type="term" value="C:membrane"/>
    <property type="evidence" value="ECO:0007669"/>
    <property type="project" value="GOC"/>
</dbReference>
<dbReference type="GO" id="GO:0000035">
    <property type="term" value="F:acyl binding"/>
    <property type="evidence" value="ECO:0007669"/>
    <property type="project" value="TreeGrafter"/>
</dbReference>
<dbReference type="GO" id="GO:0000036">
    <property type="term" value="F:acyl carrier activity"/>
    <property type="evidence" value="ECO:0007669"/>
    <property type="project" value="UniProtKB-UniRule"/>
</dbReference>
<dbReference type="GO" id="GO:0009245">
    <property type="term" value="P:lipid A biosynthetic process"/>
    <property type="evidence" value="ECO:0007669"/>
    <property type="project" value="TreeGrafter"/>
</dbReference>
<dbReference type="FunFam" id="1.10.1200.10:FF:000001">
    <property type="entry name" value="Acyl carrier protein"/>
    <property type="match status" value="1"/>
</dbReference>
<dbReference type="Gene3D" id="1.10.1200.10">
    <property type="entry name" value="ACP-like"/>
    <property type="match status" value="1"/>
</dbReference>
<dbReference type="HAMAP" id="MF_01217">
    <property type="entry name" value="Acyl_carrier"/>
    <property type="match status" value="1"/>
</dbReference>
<dbReference type="InterPro" id="IPR003231">
    <property type="entry name" value="ACP"/>
</dbReference>
<dbReference type="InterPro" id="IPR036736">
    <property type="entry name" value="ACP-like_sf"/>
</dbReference>
<dbReference type="InterPro" id="IPR009081">
    <property type="entry name" value="PP-bd_ACP"/>
</dbReference>
<dbReference type="InterPro" id="IPR006162">
    <property type="entry name" value="Ppantetheine_attach_site"/>
</dbReference>
<dbReference type="NCBIfam" id="TIGR00517">
    <property type="entry name" value="acyl_carrier"/>
    <property type="match status" value="1"/>
</dbReference>
<dbReference type="NCBIfam" id="NF002148">
    <property type="entry name" value="PRK00982.1-2"/>
    <property type="match status" value="1"/>
</dbReference>
<dbReference type="NCBIfam" id="NF002149">
    <property type="entry name" value="PRK00982.1-3"/>
    <property type="match status" value="1"/>
</dbReference>
<dbReference type="NCBIfam" id="NF002150">
    <property type="entry name" value="PRK00982.1-4"/>
    <property type="match status" value="1"/>
</dbReference>
<dbReference type="NCBIfam" id="NF002151">
    <property type="entry name" value="PRK00982.1-5"/>
    <property type="match status" value="1"/>
</dbReference>
<dbReference type="PANTHER" id="PTHR20863">
    <property type="entry name" value="ACYL CARRIER PROTEIN"/>
    <property type="match status" value="1"/>
</dbReference>
<dbReference type="PANTHER" id="PTHR20863:SF76">
    <property type="entry name" value="CARRIER DOMAIN-CONTAINING PROTEIN"/>
    <property type="match status" value="1"/>
</dbReference>
<dbReference type="Pfam" id="PF00550">
    <property type="entry name" value="PP-binding"/>
    <property type="match status" value="1"/>
</dbReference>
<dbReference type="SUPFAM" id="SSF47336">
    <property type="entry name" value="ACP-like"/>
    <property type="match status" value="1"/>
</dbReference>
<dbReference type="PROSITE" id="PS50075">
    <property type="entry name" value="CARRIER"/>
    <property type="match status" value="1"/>
</dbReference>
<dbReference type="PROSITE" id="PS00012">
    <property type="entry name" value="PHOSPHOPANTETHEINE"/>
    <property type="match status" value="1"/>
</dbReference>